<comment type="function">
    <text evidence="1">Phosphorylation of dTMP to form dTDP in both de novo and salvage pathways of dTTP synthesis.</text>
</comment>
<comment type="catalytic activity">
    <reaction evidence="1">
        <text>dTMP + ATP = dTDP + ADP</text>
        <dbReference type="Rhea" id="RHEA:13517"/>
        <dbReference type="ChEBI" id="CHEBI:30616"/>
        <dbReference type="ChEBI" id="CHEBI:58369"/>
        <dbReference type="ChEBI" id="CHEBI:63528"/>
        <dbReference type="ChEBI" id="CHEBI:456216"/>
        <dbReference type="EC" id="2.7.4.9"/>
    </reaction>
</comment>
<comment type="similarity">
    <text evidence="1">Belongs to the thymidylate kinase family.</text>
</comment>
<keyword id="KW-0067">ATP-binding</keyword>
<keyword id="KW-0418">Kinase</keyword>
<keyword id="KW-0545">Nucleotide biosynthesis</keyword>
<keyword id="KW-0547">Nucleotide-binding</keyword>
<keyword id="KW-1185">Reference proteome</keyword>
<keyword id="KW-0808">Transferase</keyword>
<feature type="chain" id="PRO_1000023175" description="Thymidylate kinase">
    <location>
        <begin position="1"/>
        <end position="219"/>
    </location>
</feature>
<feature type="binding site" evidence="1">
    <location>
        <begin position="7"/>
        <end position="14"/>
    </location>
    <ligand>
        <name>ATP</name>
        <dbReference type="ChEBI" id="CHEBI:30616"/>
    </ligand>
</feature>
<proteinExistence type="inferred from homology"/>
<reference key="1">
    <citation type="submission" date="2006-12" db="EMBL/GenBank/DDBJ databases">
        <title>Complete sequence of Chlorobium phaeobacteroides DSM 266.</title>
        <authorList>
            <consortium name="US DOE Joint Genome Institute"/>
            <person name="Copeland A."/>
            <person name="Lucas S."/>
            <person name="Lapidus A."/>
            <person name="Barry K."/>
            <person name="Detter J.C."/>
            <person name="Glavina del Rio T."/>
            <person name="Hammon N."/>
            <person name="Israni S."/>
            <person name="Pitluck S."/>
            <person name="Goltsman E."/>
            <person name="Schmutz J."/>
            <person name="Larimer F."/>
            <person name="Land M."/>
            <person name="Hauser L."/>
            <person name="Mikhailova N."/>
            <person name="Li T."/>
            <person name="Overmann J."/>
            <person name="Bryant D.A."/>
            <person name="Richardson P."/>
        </authorList>
    </citation>
    <scope>NUCLEOTIDE SEQUENCE [LARGE SCALE GENOMIC DNA]</scope>
    <source>
        <strain>DSM 266 / SMG 266 / 2430</strain>
    </source>
</reference>
<evidence type="ECO:0000255" key="1">
    <source>
        <dbReference type="HAMAP-Rule" id="MF_00165"/>
    </source>
</evidence>
<protein>
    <recommendedName>
        <fullName evidence="1">Thymidylate kinase</fullName>
        <ecNumber evidence="1">2.7.4.9</ecNumber>
    </recommendedName>
    <alternativeName>
        <fullName evidence="1">dTMP kinase</fullName>
    </alternativeName>
</protein>
<name>KTHY_CHLPD</name>
<accession>A1BGY2</accession>
<sequence>MLITFEGIDGAGKSTQIKKLQTVLNKAGVESVTLREPGGTEVAEKIRSILLESRHEISAVGELLLFSATRAELVQQVIIPALQTDAVVILDRFYDSTRAYQGYGRGIDLTILETIIAFSTFNLIPDVTFYLDIKPEDAMIRKNSKKSLPLAFENSDLDRMERSGLEFYSKVRNGYFEIIRSEQHRFKVLNALEHPDDLHRQILETLRKKKPALKALNRY</sequence>
<organism>
    <name type="scientific">Chlorobium phaeobacteroides (strain DSM 266 / SMG 266 / 2430)</name>
    <dbReference type="NCBI Taxonomy" id="290317"/>
    <lineage>
        <taxon>Bacteria</taxon>
        <taxon>Pseudomonadati</taxon>
        <taxon>Chlorobiota</taxon>
        <taxon>Chlorobiia</taxon>
        <taxon>Chlorobiales</taxon>
        <taxon>Chlorobiaceae</taxon>
        <taxon>Chlorobium/Pelodictyon group</taxon>
        <taxon>Chlorobium</taxon>
    </lineage>
</organism>
<dbReference type="EC" id="2.7.4.9" evidence="1"/>
<dbReference type="EMBL" id="CP000492">
    <property type="protein sequence ID" value="ABL65659.1"/>
    <property type="molecule type" value="Genomic_DNA"/>
</dbReference>
<dbReference type="RefSeq" id="WP_011745469.1">
    <property type="nucleotide sequence ID" value="NC_008639.1"/>
</dbReference>
<dbReference type="SMR" id="A1BGY2"/>
<dbReference type="STRING" id="290317.Cpha266_1638"/>
<dbReference type="KEGG" id="cph:Cpha266_1638"/>
<dbReference type="eggNOG" id="COG0125">
    <property type="taxonomic scope" value="Bacteria"/>
</dbReference>
<dbReference type="HOGENOM" id="CLU_049131_0_2_10"/>
<dbReference type="OrthoDB" id="9774907at2"/>
<dbReference type="Proteomes" id="UP000008701">
    <property type="component" value="Chromosome"/>
</dbReference>
<dbReference type="GO" id="GO:0005829">
    <property type="term" value="C:cytosol"/>
    <property type="evidence" value="ECO:0007669"/>
    <property type="project" value="TreeGrafter"/>
</dbReference>
<dbReference type="GO" id="GO:0005524">
    <property type="term" value="F:ATP binding"/>
    <property type="evidence" value="ECO:0007669"/>
    <property type="project" value="UniProtKB-UniRule"/>
</dbReference>
<dbReference type="GO" id="GO:0004798">
    <property type="term" value="F:dTMP kinase activity"/>
    <property type="evidence" value="ECO:0007669"/>
    <property type="project" value="UniProtKB-UniRule"/>
</dbReference>
<dbReference type="GO" id="GO:0006233">
    <property type="term" value="P:dTDP biosynthetic process"/>
    <property type="evidence" value="ECO:0007669"/>
    <property type="project" value="InterPro"/>
</dbReference>
<dbReference type="GO" id="GO:0006235">
    <property type="term" value="P:dTTP biosynthetic process"/>
    <property type="evidence" value="ECO:0007669"/>
    <property type="project" value="UniProtKB-UniRule"/>
</dbReference>
<dbReference type="GO" id="GO:0006227">
    <property type="term" value="P:dUDP biosynthetic process"/>
    <property type="evidence" value="ECO:0007669"/>
    <property type="project" value="TreeGrafter"/>
</dbReference>
<dbReference type="CDD" id="cd01672">
    <property type="entry name" value="TMPK"/>
    <property type="match status" value="1"/>
</dbReference>
<dbReference type="FunFam" id="3.40.50.300:FF:000225">
    <property type="entry name" value="Thymidylate kinase"/>
    <property type="match status" value="1"/>
</dbReference>
<dbReference type="Gene3D" id="3.40.50.300">
    <property type="entry name" value="P-loop containing nucleotide triphosphate hydrolases"/>
    <property type="match status" value="1"/>
</dbReference>
<dbReference type="HAMAP" id="MF_00165">
    <property type="entry name" value="Thymidylate_kinase"/>
    <property type="match status" value="1"/>
</dbReference>
<dbReference type="InterPro" id="IPR027417">
    <property type="entry name" value="P-loop_NTPase"/>
</dbReference>
<dbReference type="InterPro" id="IPR039430">
    <property type="entry name" value="Thymidylate_kin-like_dom"/>
</dbReference>
<dbReference type="InterPro" id="IPR018095">
    <property type="entry name" value="Thymidylate_kin_CS"/>
</dbReference>
<dbReference type="InterPro" id="IPR018094">
    <property type="entry name" value="Thymidylate_kinase"/>
</dbReference>
<dbReference type="NCBIfam" id="TIGR00041">
    <property type="entry name" value="DTMP_kinase"/>
    <property type="match status" value="1"/>
</dbReference>
<dbReference type="PANTHER" id="PTHR10344">
    <property type="entry name" value="THYMIDYLATE KINASE"/>
    <property type="match status" value="1"/>
</dbReference>
<dbReference type="PANTHER" id="PTHR10344:SF4">
    <property type="entry name" value="UMP-CMP KINASE 2, MITOCHONDRIAL"/>
    <property type="match status" value="1"/>
</dbReference>
<dbReference type="Pfam" id="PF02223">
    <property type="entry name" value="Thymidylate_kin"/>
    <property type="match status" value="1"/>
</dbReference>
<dbReference type="SUPFAM" id="SSF52540">
    <property type="entry name" value="P-loop containing nucleoside triphosphate hydrolases"/>
    <property type="match status" value="1"/>
</dbReference>
<dbReference type="PROSITE" id="PS01331">
    <property type="entry name" value="THYMIDYLATE_KINASE"/>
    <property type="match status" value="1"/>
</dbReference>
<gene>
    <name evidence="1" type="primary">tmk</name>
    <name type="ordered locus">Cpha266_1638</name>
</gene>